<reference key="1">
    <citation type="journal article" date="2000" name="Biochem. J.">
        <title>Two phospholipase A2 inhibitors from the plasma of Cerrophidion (Bothrops) godmani which selectively inhibit two different group-II phospholipase A2 myotoxins from its own venom: isolation, molecular cloning and biological properties.</title>
        <authorList>
            <person name="Lizano S."/>
            <person name="Angulo Y."/>
            <person name="Lomonte B."/>
            <person name="Fox J.W."/>
            <person name="Lambeau G."/>
            <person name="Lazdunski M."/>
            <person name="Gutierrez J.M."/>
        </authorList>
    </citation>
    <scope>NUCLEOTIDE SEQUENCE [MRNA]</scope>
    <scope>PROTEIN SEQUENCE OF 20-46</scope>
    <scope>SUBCELLULAR LOCATION</scope>
    <scope>GLYCOSYLATION</scope>
    <source>
        <tissue>Liver</tissue>
        <tissue>Plasma</tissue>
    </source>
</reference>
<sequence length="166" mass="18282">MRLILLSGLLLLGTFLANGDEKDSEIQLLNSMIEAVMILQRDFSNLRYALMTVHNARSFGSGSERVYVSNKEVSKFEGLEEICSQAGGHIPSPQLENQNKAFADVLERHNKAAYLVVGDSANFTNWAAGHPNEADGTCVKADTHGSWHSASCDDNLLVVCEFYFIL</sequence>
<dbReference type="SMR" id="P0DQP8"/>
<dbReference type="GO" id="GO:0005576">
    <property type="term" value="C:extracellular region"/>
    <property type="evidence" value="ECO:0007669"/>
    <property type="project" value="UniProtKB-SubCell"/>
</dbReference>
<dbReference type="GO" id="GO:0030246">
    <property type="term" value="F:carbohydrate binding"/>
    <property type="evidence" value="ECO:0007669"/>
    <property type="project" value="UniProtKB-KW"/>
</dbReference>
<dbReference type="GO" id="GO:0019834">
    <property type="term" value="F:phospholipase A2 inhibitor activity"/>
    <property type="evidence" value="ECO:0007669"/>
    <property type="project" value="UniProtKB-KW"/>
</dbReference>
<dbReference type="Gene3D" id="3.10.100.10">
    <property type="entry name" value="Mannose-Binding Protein A, subunit A"/>
    <property type="match status" value="1"/>
</dbReference>
<dbReference type="InterPro" id="IPR001304">
    <property type="entry name" value="C-type_lectin-like"/>
</dbReference>
<dbReference type="InterPro" id="IPR016186">
    <property type="entry name" value="C-type_lectin-like/link_sf"/>
</dbReference>
<dbReference type="InterPro" id="IPR018378">
    <property type="entry name" value="C-type_lectin_CS"/>
</dbReference>
<dbReference type="InterPro" id="IPR016187">
    <property type="entry name" value="CTDL_fold"/>
</dbReference>
<dbReference type="Pfam" id="PF00059">
    <property type="entry name" value="Lectin_C"/>
    <property type="match status" value="1"/>
</dbReference>
<dbReference type="SUPFAM" id="SSF56436">
    <property type="entry name" value="C-type lectin-like"/>
    <property type="match status" value="1"/>
</dbReference>
<dbReference type="PROSITE" id="PS00615">
    <property type="entry name" value="C_TYPE_LECTIN_1"/>
    <property type="match status" value="1"/>
</dbReference>
<dbReference type="PROSITE" id="PS50041">
    <property type="entry name" value="C_TYPE_LECTIN_2"/>
    <property type="match status" value="1"/>
</dbReference>
<keyword id="KW-0903">Direct protein sequencing</keyword>
<keyword id="KW-1015">Disulfide bond</keyword>
<keyword id="KW-0325">Glycoprotein</keyword>
<keyword id="KW-0430">Lectin</keyword>
<keyword id="KW-0593">Phospholipase A2 inhibitor</keyword>
<keyword id="KW-0964">Secreted</keyword>
<keyword id="KW-0732">Signal</keyword>
<comment type="function">
    <text evidence="3">Selectively inhibits the toxic properties of myotoxin-II from the same venom (AC P81165) (PubMed:10698689). Does not inhibit PLA2, anti-coagulant and lethal activities of the basic myotoxin I from the same venom (AC P0DQP6), nor the different crotoxin forms (heterodimer or subunit B alone) (PubMed:10698689). Does not block the enzymatic activity of crude acidic PLA2 fractions from the same venom (PubMed:10698689).</text>
</comment>
<comment type="subunit">
    <text evidence="3">Homomer composed of 20-25-kDa subunits that form oligomers of 180 kDa.</text>
</comment>
<comment type="subcellular location">
    <subcellularLocation>
        <location evidence="1">Secreted</location>
    </subcellularLocation>
    <text evidence="1">Secreted in plasma.</text>
</comment>
<comment type="tissue specificity">
    <text evidence="1">Expressed by the liver.</text>
</comment>
<comment type="PTM">
    <text evidence="3">N-glycosylated. The glycosidic chain may contain superficial sialic acid residues.</text>
</comment>
<comment type="similarity">
    <text evidence="5">Belongs to the alpha-type phospholipase A2 inhibitor family.</text>
</comment>
<organism>
    <name type="scientific">Cerrophidion godmani</name>
    <name type="common">Porthidium godmani</name>
    <name type="synonym">Bothrops godmani</name>
    <dbReference type="NCBI Taxonomy" id="44722"/>
    <lineage>
        <taxon>Eukaryota</taxon>
        <taxon>Metazoa</taxon>
        <taxon>Chordata</taxon>
        <taxon>Craniata</taxon>
        <taxon>Vertebrata</taxon>
        <taxon>Euteleostomi</taxon>
        <taxon>Lepidosauria</taxon>
        <taxon>Squamata</taxon>
        <taxon>Bifurcata</taxon>
        <taxon>Unidentata</taxon>
        <taxon>Episquamata</taxon>
        <taxon>Toxicofera</taxon>
        <taxon>Serpentes</taxon>
        <taxon>Colubroidea</taxon>
        <taxon>Viperidae</taxon>
        <taxon>Crotalinae</taxon>
        <taxon>Cerrophidion</taxon>
    </lineage>
</organism>
<name>PLIA2_CERGO</name>
<protein>
    <recommendedName>
        <fullName evidence="4">Phospholipase A2 inhibitor CgMIP-II</fullName>
    </recommendedName>
    <alternativeName>
        <fullName evidence="4">Myotoxin inhibitor protein II of C.godmani</fullName>
        <shortName evidence="4">CgMIP-II</shortName>
    </alternativeName>
    <alternativeName>
        <fullName>alpha-PLI</fullName>
    </alternativeName>
</protein>
<proteinExistence type="evidence at protein level"/>
<evidence type="ECO:0000250" key="1">
    <source>
        <dbReference type="UniProtKB" id="P21755"/>
    </source>
</evidence>
<evidence type="ECO:0000255" key="2">
    <source>
        <dbReference type="PROSITE-ProRule" id="PRU00040"/>
    </source>
</evidence>
<evidence type="ECO:0000269" key="3">
    <source>
    </source>
</evidence>
<evidence type="ECO:0000303" key="4">
    <source>
    </source>
</evidence>
<evidence type="ECO:0000305" key="5"/>
<evidence type="ECO:0000305" key="6">
    <source>
    </source>
</evidence>
<accession>P0DQP8</accession>
<feature type="signal peptide" evidence="3">
    <location>
        <begin position="1"/>
        <end position="19"/>
    </location>
</feature>
<feature type="chain" id="PRO_0000452706" description="Phospholipase A2 inhibitor CgMIP-II" evidence="6">
    <location>
        <begin position="20"/>
        <end position="166"/>
    </location>
</feature>
<feature type="domain" description="C-type lectin" evidence="2">
    <location>
        <begin position="46"/>
        <end position="161"/>
    </location>
</feature>
<feature type="glycosylation site" description="N-linked (GlcNAc...) asparagine" evidence="1">
    <location>
        <position position="122"/>
    </location>
</feature>
<feature type="disulfide bond" evidence="1">
    <location>
        <begin position="83"/>
        <end position="160"/>
    </location>
</feature>
<feature type="disulfide bond" evidence="1">
    <location>
        <begin position="138"/>
        <end position="152"/>
    </location>
</feature>
<feature type="sequence conflict" description="In Ref. 1; AA sequence." evidence="5" ref="1">
    <original>DF</original>
    <variation>HV</variation>
    <location>
        <begin position="42"/>
        <end position="43"/>
    </location>
</feature>